<accession>O32221</accession>
<evidence type="ECO:0000255" key="1">
    <source>
        <dbReference type="PROSITE-ProRule" id="PRU00280"/>
    </source>
</evidence>
<evidence type="ECO:0000269" key="2">
    <source>
    </source>
</evidence>
<evidence type="ECO:0000269" key="3">
    <source>
    </source>
</evidence>
<evidence type="ECO:0000269" key="4">
    <source>
    </source>
</evidence>
<evidence type="ECO:0007829" key="5">
    <source>
        <dbReference type="PDB" id="1K0V"/>
    </source>
</evidence>
<evidence type="ECO:0007829" key="6">
    <source>
        <dbReference type="PDB" id="2QIF"/>
    </source>
</evidence>
<protein>
    <recommendedName>
        <fullName>Copper chaperone CopZ</fullName>
    </recommendedName>
    <alternativeName>
        <fullName>Copper-ion-binding protein</fullName>
    </alternativeName>
</protein>
<gene>
    <name type="primary">copZ</name>
    <name type="synonym">yvgY</name>
    <name type="ordered locus">BSU33510</name>
</gene>
<name>COPZ_BACSU</name>
<comment type="function">
    <text evidence="4">Chaperone that serves for the intracellular sequestration and transport of Cu(+). Delivers Cu(+) to the copper-transporting ATPase CopA. Functions in E.coli to transfer Cu(+) to CopA missing its first metal-binding domain (PubMed:25899340).</text>
</comment>
<comment type="subunit">
    <text evidence="2 3">Monomer in the absence of copper. Homodimer in the presence of copper ions. Forms a heterodimer (electrostatic interactions) with CopA during the transfer of Cu(+).</text>
</comment>
<comment type="subcellular location">
    <subcellularLocation>
        <location>Cytoplasm</location>
    </subcellularLocation>
</comment>
<comment type="induction">
    <text>By Cu(2+).</text>
</comment>
<comment type="miscellaneous">
    <text>The copZA operon is activated by CueR and indirectly repressed by YfmP.</text>
</comment>
<comment type="miscellaneous">
    <text>Cu(+) ion is always at least three-coordinated. Physiological thiol may be needed to complete the Cu(+) coordination sphere in order to prevent homodimer (dead-end products) formation between 2 CopZ.</text>
</comment>
<reference key="1">
    <citation type="journal article" date="1997" name="Nature">
        <title>The complete genome sequence of the Gram-positive bacterium Bacillus subtilis.</title>
        <authorList>
            <person name="Kunst F."/>
            <person name="Ogasawara N."/>
            <person name="Moszer I."/>
            <person name="Albertini A.M."/>
            <person name="Alloni G."/>
            <person name="Azevedo V."/>
            <person name="Bertero M.G."/>
            <person name="Bessieres P."/>
            <person name="Bolotin A."/>
            <person name="Borchert S."/>
            <person name="Borriss R."/>
            <person name="Boursier L."/>
            <person name="Brans A."/>
            <person name="Braun M."/>
            <person name="Brignell S.C."/>
            <person name="Bron S."/>
            <person name="Brouillet S."/>
            <person name="Bruschi C.V."/>
            <person name="Caldwell B."/>
            <person name="Capuano V."/>
            <person name="Carter N.M."/>
            <person name="Choi S.-K."/>
            <person name="Codani J.-J."/>
            <person name="Connerton I.F."/>
            <person name="Cummings N.J."/>
            <person name="Daniel R.A."/>
            <person name="Denizot F."/>
            <person name="Devine K.M."/>
            <person name="Duesterhoeft A."/>
            <person name="Ehrlich S.D."/>
            <person name="Emmerson P.T."/>
            <person name="Entian K.-D."/>
            <person name="Errington J."/>
            <person name="Fabret C."/>
            <person name="Ferrari E."/>
            <person name="Foulger D."/>
            <person name="Fritz C."/>
            <person name="Fujita M."/>
            <person name="Fujita Y."/>
            <person name="Fuma S."/>
            <person name="Galizzi A."/>
            <person name="Galleron N."/>
            <person name="Ghim S.-Y."/>
            <person name="Glaser P."/>
            <person name="Goffeau A."/>
            <person name="Golightly E.J."/>
            <person name="Grandi G."/>
            <person name="Guiseppi G."/>
            <person name="Guy B.J."/>
            <person name="Haga K."/>
            <person name="Haiech J."/>
            <person name="Harwood C.R."/>
            <person name="Henaut A."/>
            <person name="Hilbert H."/>
            <person name="Holsappel S."/>
            <person name="Hosono S."/>
            <person name="Hullo M.-F."/>
            <person name="Itaya M."/>
            <person name="Jones L.-M."/>
            <person name="Joris B."/>
            <person name="Karamata D."/>
            <person name="Kasahara Y."/>
            <person name="Klaerr-Blanchard M."/>
            <person name="Klein C."/>
            <person name="Kobayashi Y."/>
            <person name="Koetter P."/>
            <person name="Koningstein G."/>
            <person name="Krogh S."/>
            <person name="Kumano M."/>
            <person name="Kurita K."/>
            <person name="Lapidus A."/>
            <person name="Lardinois S."/>
            <person name="Lauber J."/>
            <person name="Lazarevic V."/>
            <person name="Lee S.-M."/>
            <person name="Levine A."/>
            <person name="Liu H."/>
            <person name="Masuda S."/>
            <person name="Mauel C."/>
            <person name="Medigue C."/>
            <person name="Medina N."/>
            <person name="Mellado R.P."/>
            <person name="Mizuno M."/>
            <person name="Moestl D."/>
            <person name="Nakai S."/>
            <person name="Noback M."/>
            <person name="Noone D."/>
            <person name="O'Reilly M."/>
            <person name="Ogawa K."/>
            <person name="Ogiwara A."/>
            <person name="Oudega B."/>
            <person name="Park S.-H."/>
            <person name="Parro V."/>
            <person name="Pohl T.M."/>
            <person name="Portetelle D."/>
            <person name="Porwollik S."/>
            <person name="Prescott A.M."/>
            <person name="Presecan E."/>
            <person name="Pujic P."/>
            <person name="Purnelle B."/>
            <person name="Rapoport G."/>
            <person name="Rey M."/>
            <person name="Reynolds S."/>
            <person name="Rieger M."/>
            <person name="Rivolta C."/>
            <person name="Rocha E."/>
            <person name="Roche B."/>
            <person name="Rose M."/>
            <person name="Sadaie Y."/>
            <person name="Sato T."/>
            <person name="Scanlan E."/>
            <person name="Schleich S."/>
            <person name="Schroeter R."/>
            <person name="Scoffone F."/>
            <person name="Sekiguchi J."/>
            <person name="Sekowska A."/>
            <person name="Seror S.J."/>
            <person name="Serror P."/>
            <person name="Shin B.-S."/>
            <person name="Soldo B."/>
            <person name="Sorokin A."/>
            <person name="Tacconi E."/>
            <person name="Takagi T."/>
            <person name="Takahashi H."/>
            <person name="Takemaru K."/>
            <person name="Takeuchi M."/>
            <person name="Tamakoshi A."/>
            <person name="Tanaka T."/>
            <person name="Terpstra P."/>
            <person name="Tognoni A."/>
            <person name="Tosato V."/>
            <person name="Uchiyama S."/>
            <person name="Vandenbol M."/>
            <person name="Vannier F."/>
            <person name="Vassarotti A."/>
            <person name="Viari A."/>
            <person name="Wambutt R."/>
            <person name="Wedler E."/>
            <person name="Wedler H."/>
            <person name="Weitzenegger T."/>
            <person name="Winters P."/>
            <person name="Wipat A."/>
            <person name="Yamamoto H."/>
            <person name="Yamane K."/>
            <person name="Yasumoto K."/>
            <person name="Yata K."/>
            <person name="Yoshida K."/>
            <person name="Yoshikawa H.-F."/>
            <person name="Zumstein E."/>
            <person name="Yoshikawa H."/>
            <person name="Danchin A."/>
        </authorList>
    </citation>
    <scope>NUCLEOTIDE SEQUENCE [LARGE SCALE GENOMIC DNA]</scope>
    <source>
        <strain>168</strain>
    </source>
</reference>
<reference key="2">
    <citation type="journal article" date="2003" name="FEMS Microbiol. Lett.">
        <title>CopZ from Bacillus subtilis interacts in vivo with a copper exporting CPx-type ATPase CopA.</title>
        <authorList>
            <person name="Radford D.S."/>
            <person name="Kihlken M.A."/>
            <person name="Borrelly G.P.M."/>
            <person name="Harwood C.R."/>
            <person name="Le Brun N.E."/>
            <person name="Cavet J.S."/>
        </authorList>
    </citation>
    <scope>INTERACTION WITH COPA</scope>
</reference>
<reference key="3">
    <citation type="journal article" date="2003" name="Microbiology">
        <title>Two MerR homologues that affect copper induction of the Bacillus subtilis copZA operon.</title>
        <authorList>
            <person name="Gaballa A."/>
            <person name="Cao M."/>
            <person name="Helmann J.D."/>
        </authorList>
    </citation>
    <scope>REGULATION</scope>
</reference>
<reference key="4">
    <citation type="journal article" date="2015" name="Mol. Microbiol.">
        <title>Distinct functions of serial metal-binding domains in the Escherichia coli P1 B-ATPase CopA.</title>
        <authorList>
            <person name="Drees S.L."/>
            <person name="Beyer D.F."/>
            <person name="Lenders-Lomscher C."/>
            <person name="Luebben M."/>
        </authorList>
    </citation>
    <scope>FUNCTION AS A CHAPERONE</scope>
</reference>
<reference key="5">
    <citation type="journal article" date="2002" name="Biochem. J.">
        <title>Copper-mediated dimerization of CopZ, a predicted copper chaperone from Bacillus subtilis.</title>
        <authorList>
            <person name="Kihlken M.A."/>
            <person name="Leech A.P."/>
            <person name="Le Brun N.E."/>
        </authorList>
    </citation>
    <scope>X-RAY CRYSTALLOGRAPHY (1.5 ANGSTROMS) IN COMPLEX WITH COPPER IONS</scope>
    <scope>MUTAGENESIS OF CYS-13 AND CYS-16</scope>
    <scope>SUBUNIT</scope>
</reference>
<reference key="6">
    <citation type="journal article" date="2003" name="Biochemistry">
        <title>X-ray absorption and NMR spectroscopic studies of CopZ, a copper chaperone in Bacillus subtilis: the coordination properties of the copper ion.</title>
        <authorList>
            <person name="Banci L."/>
            <person name="Bertini I."/>
            <person name="Del Conte R."/>
            <person name="Mangani S."/>
            <person name="Meyer-Klaucke W."/>
        </authorList>
    </citation>
    <scope>STRUCTURE BY NMR IN COMPLEX WITH COPPER IONS</scope>
    <scope>SUBUNIT</scope>
</reference>
<reference key="7">
    <citation type="journal article" date="2003" name="Biochemistry">
        <title>Solution structure of apo CopZ from Bacillus subtilis: further analysis of the changes associated with the presence of copper.</title>
        <authorList>
            <person name="Banci L."/>
            <person name="Bertini I."/>
            <person name="Del Conte R."/>
        </authorList>
    </citation>
    <scope>STRUCTURE BY NMR</scope>
</reference>
<organism>
    <name type="scientific">Bacillus subtilis (strain 168)</name>
    <dbReference type="NCBI Taxonomy" id="224308"/>
    <lineage>
        <taxon>Bacteria</taxon>
        <taxon>Bacillati</taxon>
        <taxon>Bacillota</taxon>
        <taxon>Bacilli</taxon>
        <taxon>Bacillales</taxon>
        <taxon>Bacillaceae</taxon>
        <taxon>Bacillus</taxon>
    </lineage>
</organism>
<dbReference type="EMBL" id="AL009126">
    <property type="protein sequence ID" value="CAB15356.1"/>
    <property type="molecule type" value="Genomic_DNA"/>
</dbReference>
<dbReference type="PIR" id="F70041">
    <property type="entry name" value="F70041"/>
</dbReference>
<dbReference type="RefSeq" id="NP_391231.1">
    <property type="nucleotide sequence ID" value="NC_000964.3"/>
</dbReference>
<dbReference type="RefSeq" id="WP_003244260.1">
    <property type="nucleotide sequence ID" value="NZ_OZ025638.1"/>
</dbReference>
<dbReference type="PDB" id="1K0V">
    <property type="method" value="NMR"/>
    <property type="chains" value="A=1-69"/>
</dbReference>
<dbReference type="PDB" id="1P8G">
    <property type="method" value="NMR"/>
    <property type="chains" value="A=1-69"/>
</dbReference>
<dbReference type="PDB" id="2QIF">
    <property type="method" value="X-ray"/>
    <property type="resolution" value="1.50 A"/>
    <property type="chains" value="A/B=1-69"/>
</dbReference>
<dbReference type="PDB" id="3I9Z">
    <property type="method" value="X-ray"/>
    <property type="resolution" value="1.90 A"/>
    <property type="chains" value="A=1-69"/>
</dbReference>
<dbReference type="PDBsum" id="1K0V"/>
<dbReference type="PDBsum" id="1P8G"/>
<dbReference type="PDBsum" id="2QIF"/>
<dbReference type="PDBsum" id="3I9Z"/>
<dbReference type="BMRB" id="O32221"/>
<dbReference type="SMR" id="O32221"/>
<dbReference type="FunCoup" id="O32221">
    <property type="interactions" value="74"/>
</dbReference>
<dbReference type="IntAct" id="O32221">
    <property type="interactions" value="1"/>
</dbReference>
<dbReference type="STRING" id="224308.BSU33510"/>
<dbReference type="jPOST" id="O32221"/>
<dbReference type="PaxDb" id="224308-BSU33510"/>
<dbReference type="EnsemblBacteria" id="CAB15356">
    <property type="protein sequence ID" value="CAB15356"/>
    <property type="gene ID" value="BSU_33510"/>
</dbReference>
<dbReference type="GeneID" id="937974"/>
<dbReference type="KEGG" id="bsu:BSU33510"/>
<dbReference type="PATRIC" id="fig|224308.179.peg.3636"/>
<dbReference type="eggNOG" id="COG2608">
    <property type="taxonomic scope" value="Bacteria"/>
</dbReference>
<dbReference type="InParanoid" id="O32221"/>
<dbReference type="OrthoDB" id="9813965at2"/>
<dbReference type="PhylomeDB" id="O32221"/>
<dbReference type="BioCyc" id="BSUB:BSU33510-MONOMER"/>
<dbReference type="EvolutionaryTrace" id="O32221"/>
<dbReference type="Proteomes" id="UP000001570">
    <property type="component" value="Chromosome"/>
</dbReference>
<dbReference type="GO" id="GO:0005737">
    <property type="term" value="C:cytoplasm"/>
    <property type="evidence" value="ECO:0007669"/>
    <property type="project" value="UniProtKB-SubCell"/>
</dbReference>
<dbReference type="GO" id="GO:0005507">
    <property type="term" value="F:copper ion binding"/>
    <property type="evidence" value="ECO:0007669"/>
    <property type="project" value="InterPro"/>
</dbReference>
<dbReference type="GO" id="GO:0006825">
    <property type="term" value="P:copper ion transport"/>
    <property type="evidence" value="ECO:0007669"/>
    <property type="project" value="InterPro"/>
</dbReference>
<dbReference type="CDD" id="cd00371">
    <property type="entry name" value="HMA"/>
    <property type="match status" value="1"/>
</dbReference>
<dbReference type="FunFam" id="3.30.70.100:FF:000005">
    <property type="entry name" value="Copper-exporting P-type ATPase A"/>
    <property type="match status" value="1"/>
</dbReference>
<dbReference type="Gene3D" id="3.30.70.100">
    <property type="match status" value="1"/>
</dbReference>
<dbReference type="InterPro" id="IPR049740">
    <property type="entry name" value="CopZ"/>
</dbReference>
<dbReference type="InterPro" id="IPR000428">
    <property type="entry name" value="Cu-bd"/>
</dbReference>
<dbReference type="InterPro" id="IPR017969">
    <property type="entry name" value="Heavy-metal-associated_CS"/>
</dbReference>
<dbReference type="InterPro" id="IPR006122">
    <property type="entry name" value="HMA_Cu_ion-bd"/>
</dbReference>
<dbReference type="InterPro" id="IPR006121">
    <property type="entry name" value="HMA_dom"/>
</dbReference>
<dbReference type="InterPro" id="IPR036163">
    <property type="entry name" value="HMA_dom_sf"/>
</dbReference>
<dbReference type="NCBIfam" id="NF033795">
    <property type="entry name" value="chaper_CopZ_Bs"/>
    <property type="match status" value="1"/>
</dbReference>
<dbReference type="NCBIfam" id="TIGR00003">
    <property type="entry name" value="copper ion binding protein"/>
    <property type="match status" value="1"/>
</dbReference>
<dbReference type="PANTHER" id="PTHR46594">
    <property type="entry name" value="P-TYPE CATION-TRANSPORTING ATPASE"/>
    <property type="match status" value="1"/>
</dbReference>
<dbReference type="PANTHER" id="PTHR46594:SF4">
    <property type="entry name" value="P-TYPE CATION-TRANSPORTING ATPASE"/>
    <property type="match status" value="1"/>
</dbReference>
<dbReference type="Pfam" id="PF00403">
    <property type="entry name" value="HMA"/>
    <property type="match status" value="1"/>
</dbReference>
<dbReference type="PRINTS" id="PR00944">
    <property type="entry name" value="CUEXPORT"/>
</dbReference>
<dbReference type="SUPFAM" id="SSF55008">
    <property type="entry name" value="HMA, heavy metal-associated domain"/>
    <property type="match status" value="1"/>
</dbReference>
<dbReference type="PROSITE" id="PS01047">
    <property type="entry name" value="HMA_1"/>
    <property type="match status" value="1"/>
</dbReference>
<dbReference type="PROSITE" id="PS50846">
    <property type="entry name" value="HMA_2"/>
    <property type="match status" value="1"/>
</dbReference>
<proteinExistence type="evidence at protein level"/>
<sequence>MEQKTLQVEGMSCQHCVKAVETSVGELDGVSAVHVNLEAGKVDVSFDADKVSVKDIADAIEDQGYDVAK</sequence>
<feature type="chain" id="PRO_0000079247" description="Copper chaperone CopZ">
    <location>
        <begin position="1"/>
        <end position="69"/>
    </location>
</feature>
<feature type="domain" description="HMA" evidence="1">
    <location>
        <begin position="2"/>
        <end position="68"/>
    </location>
</feature>
<feature type="binding site" evidence="1">
    <location>
        <position position="13"/>
    </location>
    <ligand>
        <name>Cu cation</name>
        <dbReference type="ChEBI" id="CHEBI:23378"/>
    </ligand>
</feature>
<feature type="binding site" evidence="1">
    <location>
        <position position="16"/>
    </location>
    <ligand>
        <name>Cu cation</name>
        <dbReference type="ChEBI" id="CHEBI:23378"/>
    </ligand>
</feature>
<feature type="mutagenesis site" description="Loss of copper binding; when associated with S-16." evidence="2">
    <original>C</original>
    <variation>S</variation>
    <location>
        <position position="13"/>
    </location>
</feature>
<feature type="mutagenesis site" description="Loss of copper binding; when associated with S-13." evidence="2">
    <original>C</original>
    <variation>S</variation>
    <location>
        <position position="16"/>
    </location>
</feature>
<feature type="strand" evidence="6">
    <location>
        <begin position="2"/>
        <end position="9"/>
    </location>
</feature>
<feature type="helix" evidence="6">
    <location>
        <begin position="14"/>
        <end position="25"/>
    </location>
</feature>
<feature type="strand" evidence="6">
    <location>
        <begin position="30"/>
        <end position="36"/>
    </location>
</feature>
<feature type="turn" evidence="6">
    <location>
        <begin position="37"/>
        <end position="40"/>
    </location>
</feature>
<feature type="strand" evidence="6">
    <location>
        <begin position="41"/>
        <end position="46"/>
    </location>
</feature>
<feature type="turn" evidence="6">
    <location>
        <begin position="48"/>
        <end position="50"/>
    </location>
</feature>
<feature type="helix" evidence="6">
    <location>
        <begin position="53"/>
        <end position="62"/>
    </location>
</feature>
<feature type="strand" evidence="5">
    <location>
        <begin position="67"/>
        <end position="69"/>
    </location>
</feature>
<keyword id="KW-0002">3D-structure</keyword>
<keyword id="KW-0143">Chaperone</keyword>
<keyword id="KW-0186">Copper</keyword>
<keyword id="KW-0963">Cytoplasm</keyword>
<keyword id="KW-0479">Metal-binding</keyword>
<keyword id="KW-1185">Reference proteome</keyword>